<comment type="function">
    <text evidence="1">As part of the exocyst, may play a role in regulated exocytosis of insulin granules.</text>
</comment>
<comment type="subunit">
    <text evidence="1">Interacts with EXOC2, EXOC4 and EXOC5; may be part of the exocyst.</text>
</comment>
<comment type="interaction">
    <interactant intactId="EBI-2813180">
        <id>Q86VI1</id>
    </interactant>
    <interactant intactId="EBI-3921493">
        <id>Q8N4G2</id>
        <label>ARL14</label>
    </interactant>
    <organismsDiffer>false</organismsDiffer>
    <experiments>3</experiments>
</comment>
<comment type="interaction">
    <interactant intactId="EBI-2813180">
        <id>Q86VI1</id>
    </interactant>
    <interactant intactId="EBI-4314501">
        <id>P40199</id>
        <label>CEACAM6</label>
    </interactant>
    <organismsDiffer>false</organismsDiffer>
    <experiments>3</experiments>
</comment>
<comment type="interaction">
    <interactant intactId="EBI-2813180">
        <id>Q86VI1</id>
    </interactant>
    <interactant intactId="EBI-740220">
        <id>O14964</id>
        <label>HGS</label>
    </interactant>
    <organismsDiffer>false</organismsDiffer>
    <experiments>3</experiments>
</comment>
<comment type="interaction">
    <interactant intactId="EBI-2813180">
        <id>Q86VI1</id>
    </interactant>
    <interactant intactId="EBI-3044087">
        <id>Q7Z3Y8</id>
        <label>KRT27</label>
    </interactant>
    <organismsDiffer>false</organismsDiffer>
    <experiments>3</experiments>
</comment>
<comment type="interaction">
    <interactant intactId="EBI-2813180">
        <id>Q86VI1</id>
    </interactant>
    <interactant intactId="EBI-2865580">
        <id>O43679</id>
        <label>LDB2</label>
    </interactant>
    <organismsDiffer>false</organismsDiffer>
    <experiments>3</experiments>
</comment>
<comment type="interaction">
    <interactant intactId="EBI-2813180">
        <id>Q86VI1</id>
    </interactant>
    <interactant intactId="EBI-488878">
        <id>P15172</id>
        <label>MYOD1</label>
    </interactant>
    <organismsDiffer>false</organismsDiffer>
    <experiments>3</experiments>
</comment>
<comment type="interaction">
    <interactant intactId="EBI-2813180">
        <id>Q86VI1</id>
    </interactant>
    <interactant intactId="EBI-1105213">
        <id>Q9UBB9</id>
        <label>TFIP11</label>
    </interactant>
    <organismsDiffer>false</organismsDiffer>
    <experiments>3</experiments>
</comment>
<comment type="subcellular location">
    <subcellularLocation>
        <location evidence="1">Cytoplasmic vesicle</location>
        <location evidence="1">Secretory vesicle</location>
    </subcellularLocation>
    <text evidence="1">Colocalizes with insulin granules.</text>
</comment>
<comment type="similarity">
    <text evidence="4">Belongs to the SEC6 family.</text>
</comment>
<sequence length="746" mass="81678">MDSAAKDEMQPALSPGPEWPEQERAEQLARGAALKWASGIFYRPEQLARLGQYRSREVQRTCSLESRLKSVMQSYLEGVQTGVWQLAQAIEVVQGTREALSQARGLLQGMSQALQTLEPLRERVAQHKQLQALSHLLPRLRAVPAAVSHTQTLIDGQQFLEAYVSLRELEQLREDTWAPLGGLELPVFQGLDLLFEALGQAVEAAAGAAGKLAREDPALLVAAVRVAEVETGRTTPLGQVPRDWRQRCLRALQEGLEQAHFGSPLLPAPGALPGWLEALRVALPVELATAEALVAPCCPPQYNVVQLWAHTLHSGLRRSLQNLLAGPELEAADAFALLHWALHVYLGQEMMGSLELGPEADVSQLEPLLTLENIEQLEATFVANIQASVSQWLQNALDGEVAEWGREHGPNTDPSGSYYSPMPAIVLQILEENIRVASLVSESLQQRVHGMALSELGTFLRSFSDALIRFSRDHFRGKSMAPHYVPYLLAALNHKSALSSSVSVLQLDGAPSGALAPVEAALDELQRRIYRLVLEALQAELQPLFADLPSRQWLSSPELLQSVCERTGRFCRDFWRVRNPTVQLLLAEAERAVVLQYLSALMQGRLVCRGADERTQAAERLRHDAAQLQQLFLSLGLEENAHCAPVLLALRELLNLRDPALLGLEVAGLRQQFPDVSEDHVSALLGLRGDLSREQHLAALSSLQAALPPSPRASRRVLFSLVPAPALAPASCLPSGSCARALLLAE</sequence>
<reference key="1">
    <citation type="submission" date="2003-03" db="EMBL/GenBank/DDBJ databases">
        <title>Cloning and characterization of Jiangli gene.</title>
        <authorList>
            <person name="Shan Y.X."/>
            <person name="Jiang L."/>
            <person name="Yu L."/>
        </authorList>
    </citation>
    <scope>NUCLEOTIDE SEQUENCE [MRNA]</scope>
</reference>
<reference key="2">
    <citation type="journal article" date="2004" name="Nat. Genet.">
        <title>Complete sequencing and characterization of 21,243 full-length human cDNAs.</title>
        <authorList>
            <person name="Ota T."/>
            <person name="Suzuki Y."/>
            <person name="Nishikawa T."/>
            <person name="Otsuki T."/>
            <person name="Sugiyama T."/>
            <person name="Irie R."/>
            <person name="Wakamatsu A."/>
            <person name="Hayashi K."/>
            <person name="Sato H."/>
            <person name="Nagai K."/>
            <person name="Kimura K."/>
            <person name="Makita H."/>
            <person name="Sekine M."/>
            <person name="Obayashi M."/>
            <person name="Nishi T."/>
            <person name="Shibahara T."/>
            <person name="Tanaka T."/>
            <person name="Ishii S."/>
            <person name="Yamamoto J."/>
            <person name="Saito K."/>
            <person name="Kawai Y."/>
            <person name="Isono Y."/>
            <person name="Nakamura Y."/>
            <person name="Nagahari K."/>
            <person name="Murakami K."/>
            <person name="Yasuda T."/>
            <person name="Iwayanagi T."/>
            <person name="Wagatsuma M."/>
            <person name="Shiratori A."/>
            <person name="Sudo H."/>
            <person name="Hosoiri T."/>
            <person name="Kaku Y."/>
            <person name="Kodaira H."/>
            <person name="Kondo H."/>
            <person name="Sugawara M."/>
            <person name="Takahashi M."/>
            <person name="Kanda K."/>
            <person name="Yokoi T."/>
            <person name="Furuya T."/>
            <person name="Kikkawa E."/>
            <person name="Omura Y."/>
            <person name="Abe K."/>
            <person name="Kamihara K."/>
            <person name="Katsuta N."/>
            <person name="Sato K."/>
            <person name="Tanikawa M."/>
            <person name="Yamazaki M."/>
            <person name="Ninomiya K."/>
            <person name="Ishibashi T."/>
            <person name="Yamashita H."/>
            <person name="Murakawa K."/>
            <person name="Fujimori K."/>
            <person name="Tanai H."/>
            <person name="Kimata M."/>
            <person name="Watanabe M."/>
            <person name="Hiraoka S."/>
            <person name="Chiba Y."/>
            <person name="Ishida S."/>
            <person name="Ono Y."/>
            <person name="Takiguchi S."/>
            <person name="Watanabe S."/>
            <person name="Yosida M."/>
            <person name="Hotuta T."/>
            <person name="Kusano J."/>
            <person name="Kanehori K."/>
            <person name="Takahashi-Fujii A."/>
            <person name="Hara H."/>
            <person name="Tanase T.-O."/>
            <person name="Nomura Y."/>
            <person name="Togiya S."/>
            <person name="Komai F."/>
            <person name="Hara R."/>
            <person name="Takeuchi K."/>
            <person name="Arita M."/>
            <person name="Imose N."/>
            <person name="Musashino K."/>
            <person name="Yuuki H."/>
            <person name="Oshima A."/>
            <person name="Sasaki N."/>
            <person name="Aotsuka S."/>
            <person name="Yoshikawa Y."/>
            <person name="Matsunawa H."/>
            <person name="Ichihara T."/>
            <person name="Shiohata N."/>
            <person name="Sano S."/>
            <person name="Moriya S."/>
            <person name="Momiyama H."/>
            <person name="Satoh N."/>
            <person name="Takami S."/>
            <person name="Terashima Y."/>
            <person name="Suzuki O."/>
            <person name="Nakagawa S."/>
            <person name="Senoh A."/>
            <person name="Mizoguchi H."/>
            <person name="Goto Y."/>
            <person name="Shimizu F."/>
            <person name="Wakebe H."/>
            <person name="Hishigaki H."/>
            <person name="Watanabe T."/>
            <person name="Sugiyama A."/>
            <person name="Takemoto M."/>
            <person name="Kawakami B."/>
            <person name="Yamazaki M."/>
            <person name="Watanabe K."/>
            <person name="Kumagai A."/>
            <person name="Itakura S."/>
            <person name="Fukuzumi Y."/>
            <person name="Fujimori Y."/>
            <person name="Komiyama M."/>
            <person name="Tashiro H."/>
            <person name="Tanigami A."/>
            <person name="Fujiwara T."/>
            <person name="Ono T."/>
            <person name="Yamada K."/>
            <person name="Fujii Y."/>
            <person name="Ozaki K."/>
            <person name="Hirao M."/>
            <person name="Ohmori Y."/>
            <person name="Kawabata A."/>
            <person name="Hikiji T."/>
            <person name="Kobatake N."/>
            <person name="Inagaki H."/>
            <person name="Ikema Y."/>
            <person name="Okamoto S."/>
            <person name="Okitani R."/>
            <person name="Kawakami T."/>
            <person name="Noguchi S."/>
            <person name="Itoh T."/>
            <person name="Shigeta K."/>
            <person name="Senba T."/>
            <person name="Matsumura K."/>
            <person name="Nakajima Y."/>
            <person name="Mizuno T."/>
            <person name="Morinaga M."/>
            <person name="Sasaki M."/>
            <person name="Togashi T."/>
            <person name="Oyama M."/>
            <person name="Hata H."/>
            <person name="Watanabe M."/>
            <person name="Komatsu T."/>
            <person name="Mizushima-Sugano J."/>
            <person name="Satoh T."/>
            <person name="Shirai Y."/>
            <person name="Takahashi Y."/>
            <person name="Nakagawa K."/>
            <person name="Okumura K."/>
            <person name="Nagase T."/>
            <person name="Nomura N."/>
            <person name="Kikuchi H."/>
            <person name="Masuho Y."/>
            <person name="Yamashita R."/>
            <person name="Nakai K."/>
            <person name="Yada T."/>
            <person name="Nakamura Y."/>
            <person name="Ohara O."/>
            <person name="Isogai T."/>
            <person name="Sugano S."/>
        </authorList>
    </citation>
    <scope>NUCLEOTIDE SEQUENCE [LARGE SCALE MRNA]</scope>
    <source>
        <tissue>Small intestine</tissue>
        <tissue>Spleen</tissue>
    </source>
</reference>
<reference key="3">
    <citation type="journal article" date="2004" name="Nature">
        <title>The sequence and analysis of duplication-rich human chromosome 16.</title>
        <authorList>
            <person name="Martin J."/>
            <person name="Han C."/>
            <person name="Gordon L.A."/>
            <person name="Terry A."/>
            <person name="Prabhakar S."/>
            <person name="She X."/>
            <person name="Xie G."/>
            <person name="Hellsten U."/>
            <person name="Chan Y.M."/>
            <person name="Altherr M."/>
            <person name="Couronne O."/>
            <person name="Aerts A."/>
            <person name="Bajorek E."/>
            <person name="Black S."/>
            <person name="Blumer H."/>
            <person name="Branscomb E."/>
            <person name="Brown N.C."/>
            <person name="Bruno W.J."/>
            <person name="Buckingham J.M."/>
            <person name="Callen D.F."/>
            <person name="Campbell C.S."/>
            <person name="Campbell M.L."/>
            <person name="Campbell E.W."/>
            <person name="Caoile C."/>
            <person name="Challacombe J.F."/>
            <person name="Chasteen L.A."/>
            <person name="Chertkov O."/>
            <person name="Chi H.C."/>
            <person name="Christensen M."/>
            <person name="Clark L.M."/>
            <person name="Cohn J.D."/>
            <person name="Denys M."/>
            <person name="Detter J.C."/>
            <person name="Dickson M."/>
            <person name="Dimitrijevic-Bussod M."/>
            <person name="Escobar J."/>
            <person name="Fawcett J.J."/>
            <person name="Flowers D."/>
            <person name="Fotopulos D."/>
            <person name="Glavina T."/>
            <person name="Gomez M."/>
            <person name="Gonzales E."/>
            <person name="Goodstein D."/>
            <person name="Goodwin L.A."/>
            <person name="Grady D.L."/>
            <person name="Grigoriev I."/>
            <person name="Groza M."/>
            <person name="Hammon N."/>
            <person name="Hawkins T."/>
            <person name="Haydu L."/>
            <person name="Hildebrand C.E."/>
            <person name="Huang W."/>
            <person name="Israni S."/>
            <person name="Jett J."/>
            <person name="Jewett P.B."/>
            <person name="Kadner K."/>
            <person name="Kimball H."/>
            <person name="Kobayashi A."/>
            <person name="Krawczyk M.-C."/>
            <person name="Leyba T."/>
            <person name="Longmire J.L."/>
            <person name="Lopez F."/>
            <person name="Lou Y."/>
            <person name="Lowry S."/>
            <person name="Ludeman T."/>
            <person name="Manohar C.F."/>
            <person name="Mark G.A."/>
            <person name="McMurray K.L."/>
            <person name="Meincke L.J."/>
            <person name="Morgan J."/>
            <person name="Moyzis R.K."/>
            <person name="Mundt M.O."/>
            <person name="Munk A.C."/>
            <person name="Nandkeshwar R.D."/>
            <person name="Pitluck S."/>
            <person name="Pollard M."/>
            <person name="Predki P."/>
            <person name="Parson-Quintana B."/>
            <person name="Ramirez L."/>
            <person name="Rash S."/>
            <person name="Retterer J."/>
            <person name="Ricke D.O."/>
            <person name="Robinson D.L."/>
            <person name="Rodriguez A."/>
            <person name="Salamov A."/>
            <person name="Saunders E.H."/>
            <person name="Scott D."/>
            <person name="Shough T."/>
            <person name="Stallings R.L."/>
            <person name="Stalvey M."/>
            <person name="Sutherland R.D."/>
            <person name="Tapia R."/>
            <person name="Tesmer J.G."/>
            <person name="Thayer N."/>
            <person name="Thompson L.S."/>
            <person name="Tice H."/>
            <person name="Torney D.C."/>
            <person name="Tran-Gyamfi M."/>
            <person name="Tsai M."/>
            <person name="Ulanovsky L.E."/>
            <person name="Ustaszewska A."/>
            <person name="Vo N."/>
            <person name="White P.S."/>
            <person name="Williams A.L."/>
            <person name="Wills P.L."/>
            <person name="Wu J.-R."/>
            <person name="Wu K."/>
            <person name="Yang J."/>
            <person name="DeJong P."/>
            <person name="Bruce D."/>
            <person name="Doggett N.A."/>
            <person name="Deaven L."/>
            <person name="Schmutz J."/>
            <person name="Grimwood J."/>
            <person name="Richardson P."/>
            <person name="Rokhsar D.S."/>
            <person name="Eichler E.E."/>
            <person name="Gilna P."/>
            <person name="Lucas S.M."/>
            <person name="Myers R.M."/>
            <person name="Rubin E.M."/>
            <person name="Pennacchio L.A."/>
        </authorList>
    </citation>
    <scope>NUCLEOTIDE SEQUENCE [LARGE SCALE GENOMIC DNA]</scope>
</reference>
<reference key="4">
    <citation type="submission" date="2005-07" db="EMBL/GenBank/DDBJ databases">
        <authorList>
            <person name="Mural R.J."/>
            <person name="Istrail S."/>
            <person name="Sutton G.G."/>
            <person name="Florea L."/>
            <person name="Halpern A.L."/>
            <person name="Mobarry C.M."/>
            <person name="Lippert R."/>
            <person name="Walenz B."/>
            <person name="Shatkay H."/>
            <person name="Dew I."/>
            <person name="Miller J.R."/>
            <person name="Flanigan M.J."/>
            <person name="Edwards N.J."/>
            <person name="Bolanos R."/>
            <person name="Fasulo D."/>
            <person name="Halldorsson B.V."/>
            <person name="Hannenhalli S."/>
            <person name="Turner R."/>
            <person name="Yooseph S."/>
            <person name="Lu F."/>
            <person name="Nusskern D.R."/>
            <person name="Shue B.C."/>
            <person name="Zheng X.H."/>
            <person name="Zhong F."/>
            <person name="Delcher A.L."/>
            <person name="Huson D.H."/>
            <person name="Kravitz S.A."/>
            <person name="Mouchard L."/>
            <person name="Reinert K."/>
            <person name="Remington K.A."/>
            <person name="Clark A.G."/>
            <person name="Waterman M.S."/>
            <person name="Eichler E.E."/>
            <person name="Adams M.D."/>
            <person name="Hunkapiller M.W."/>
            <person name="Myers E.W."/>
            <person name="Venter J.C."/>
        </authorList>
    </citation>
    <scope>NUCLEOTIDE SEQUENCE [LARGE SCALE GENOMIC DNA]</scope>
</reference>
<reference key="5">
    <citation type="journal article" date="2003" name="DNA Res.">
        <title>Characterization of long cDNA clones from human adult spleen. II. The complete sequences of 81 cDNA clones.</title>
        <authorList>
            <person name="Jikuya H."/>
            <person name="Takano J."/>
            <person name="Kikuno R."/>
            <person name="Hirosawa M."/>
            <person name="Nagase T."/>
            <person name="Nomura N."/>
            <person name="Ohara O."/>
        </authorList>
    </citation>
    <scope>NUCLEOTIDE SEQUENCE [LARGE SCALE MRNA] OF 151-746</scope>
    <source>
        <tissue>Spleen</tissue>
    </source>
</reference>
<reference key="6">
    <citation type="journal article" date="2006" name="Science">
        <title>The consensus coding sequences of human breast and colorectal cancers.</title>
        <authorList>
            <person name="Sjoeblom T."/>
            <person name="Jones S."/>
            <person name="Wood L.D."/>
            <person name="Parsons D.W."/>
            <person name="Lin J."/>
            <person name="Barber T.D."/>
            <person name="Mandelker D."/>
            <person name="Leary R.J."/>
            <person name="Ptak J."/>
            <person name="Silliman N."/>
            <person name="Szabo S."/>
            <person name="Buckhaults P."/>
            <person name="Farrell C."/>
            <person name="Meeh P."/>
            <person name="Markowitz S.D."/>
            <person name="Willis J."/>
            <person name="Dawson D."/>
            <person name="Willson J.K.V."/>
            <person name="Gazdar A.F."/>
            <person name="Hartigan J."/>
            <person name="Wu L."/>
            <person name="Liu C."/>
            <person name="Parmigiani G."/>
            <person name="Park B.H."/>
            <person name="Bachman K.E."/>
            <person name="Papadopoulos N."/>
            <person name="Vogelstein B."/>
            <person name="Kinzler K.W."/>
            <person name="Velculescu V.E."/>
        </authorList>
    </citation>
    <scope>VARIANTS [LARGE SCALE ANALYSIS] ASN-75 AND ASP-514</scope>
</reference>
<organism>
    <name type="scientific">Homo sapiens</name>
    <name type="common">Human</name>
    <dbReference type="NCBI Taxonomy" id="9606"/>
    <lineage>
        <taxon>Eukaryota</taxon>
        <taxon>Metazoa</taxon>
        <taxon>Chordata</taxon>
        <taxon>Craniata</taxon>
        <taxon>Vertebrata</taxon>
        <taxon>Euteleostomi</taxon>
        <taxon>Mammalia</taxon>
        <taxon>Eutheria</taxon>
        <taxon>Euarchontoglires</taxon>
        <taxon>Primates</taxon>
        <taxon>Haplorrhini</taxon>
        <taxon>Catarrhini</taxon>
        <taxon>Hominidae</taxon>
        <taxon>Homo</taxon>
    </lineage>
</organism>
<protein>
    <recommendedName>
        <fullName>Exocyst complex component 3-like protein</fullName>
    </recommendedName>
    <alternativeName>
        <fullName>Protein Jiangli</fullName>
    </alternativeName>
</protein>
<keyword id="KW-0968">Cytoplasmic vesicle</keyword>
<keyword id="KW-0268">Exocytosis</keyword>
<keyword id="KW-1267">Proteomics identification</keyword>
<keyword id="KW-1185">Reference proteome</keyword>
<accession>Q86VI1</accession>
<accession>A8K7I9</accession>
<accession>Q8NAD2</accession>
<accession>Q8TEN2</accession>
<evidence type="ECO:0000250" key="1"/>
<evidence type="ECO:0000256" key="2">
    <source>
        <dbReference type="SAM" id="MobiDB-lite"/>
    </source>
</evidence>
<evidence type="ECO:0000269" key="3">
    <source>
    </source>
</evidence>
<evidence type="ECO:0000305" key="4"/>
<proteinExistence type="evidence at protein level"/>
<name>EX3L1_HUMAN</name>
<gene>
    <name type="primary">EXOC3L1</name>
    <name type="synonym">EXOC3L</name>
</gene>
<feature type="chain" id="PRO_0000309474" description="Exocyst complex component 3-like protein">
    <location>
        <begin position="1"/>
        <end position="746"/>
    </location>
</feature>
<feature type="region of interest" description="Mediates interaction with EXOC2, EXOC4 and EXOC5" evidence="1">
    <location>
        <begin position="1"/>
        <end position="370"/>
    </location>
</feature>
<feature type="region of interest" description="Disordered" evidence="2">
    <location>
        <begin position="1"/>
        <end position="23"/>
    </location>
</feature>
<feature type="sequence variant" id="VAR_037002" description="In a breast cancer sample; somatic mutation; dbSNP:rs117403380." evidence="3">
    <original>Y</original>
    <variation>N</variation>
    <location>
        <position position="75"/>
    </location>
</feature>
<feature type="sequence variant" id="VAR_037003" description="In a breast cancer sample; somatic mutation; dbSNP:rs142958191." evidence="3">
    <original>A</original>
    <variation>D</variation>
    <location>
        <position position="514"/>
    </location>
</feature>
<feature type="sequence variant" id="VAR_036959" description="In dbSNP:rs9939768.">
    <original>Q</original>
    <variation>E</variation>
    <location>
        <position position="561"/>
    </location>
</feature>
<feature type="sequence variant" id="VAR_036960" description="In dbSNP:rs16957212.">
    <original>S</original>
    <variation>G</variation>
    <location>
        <position position="634"/>
    </location>
</feature>
<feature type="sequence conflict" description="In Ref. 5; BAB84916." evidence="4" ref="5">
    <original>V</original>
    <variation>F</variation>
    <location>
        <position position="187"/>
    </location>
</feature>
<feature type="sequence conflict" description="In Ref. 1; AAP12545 and 5; BAB84916." evidence="4" ref="1 5">
    <original>S</original>
    <variation>G</variation>
    <location>
        <position position="499"/>
    </location>
</feature>
<feature type="sequence conflict" description="In Ref. 2; BAC03991." evidence="4" ref="2">
    <location>
        <begin position="701"/>
        <end position="707"/>
    </location>
</feature>
<dbReference type="EMBL" id="AY255669">
    <property type="protein sequence ID" value="AAP12545.1"/>
    <property type="molecule type" value="mRNA"/>
</dbReference>
<dbReference type="EMBL" id="AK092858">
    <property type="protein sequence ID" value="BAC03991.1"/>
    <property type="molecule type" value="mRNA"/>
</dbReference>
<dbReference type="EMBL" id="AK292004">
    <property type="protein sequence ID" value="BAF84693.1"/>
    <property type="molecule type" value="mRNA"/>
</dbReference>
<dbReference type="EMBL" id="AC040160">
    <property type="status" value="NOT_ANNOTATED_CDS"/>
    <property type="molecule type" value="Genomic_DNA"/>
</dbReference>
<dbReference type="EMBL" id="AC074143">
    <property type="status" value="NOT_ANNOTATED_CDS"/>
    <property type="molecule type" value="Genomic_DNA"/>
</dbReference>
<dbReference type="EMBL" id="CH471092">
    <property type="protein sequence ID" value="EAW83092.1"/>
    <property type="molecule type" value="Genomic_DNA"/>
</dbReference>
<dbReference type="EMBL" id="AK074090">
    <property type="protein sequence ID" value="BAB84916.1"/>
    <property type="molecule type" value="mRNA"/>
</dbReference>
<dbReference type="CCDS" id="CCDS10832.1"/>
<dbReference type="RefSeq" id="NP_848611.2">
    <property type="nucleotide sequence ID" value="NM_178516.4"/>
</dbReference>
<dbReference type="SMR" id="Q86VI1"/>
<dbReference type="BioGRID" id="129683">
    <property type="interactions" value="32"/>
</dbReference>
<dbReference type="FunCoup" id="Q86VI1">
    <property type="interactions" value="131"/>
</dbReference>
<dbReference type="IntAct" id="Q86VI1">
    <property type="interactions" value="17"/>
</dbReference>
<dbReference type="STRING" id="9606.ENSP00000325674"/>
<dbReference type="iPTMnet" id="Q86VI1"/>
<dbReference type="PhosphoSitePlus" id="Q86VI1"/>
<dbReference type="BioMuta" id="EXOC3L1"/>
<dbReference type="DMDM" id="223590205"/>
<dbReference type="MassIVE" id="Q86VI1"/>
<dbReference type="PaxDb" id="9606-ENSP00000325674"/>
<dbReference type="PeptideAtlas" id="Q86VI1"/>
<dbReference type="ProteomicsDB" id="70022"/>
<dbReference type="Antibodypedia" id="29440">
    <property type="antibodies" value="67 antibodies from 16 providers"/>
</dbReference>
<dbReference type="DNASU" id="283849"/>
<dbReference type="Ensembl" id="ENST00000314586.11">
    <property type="protein sequence ID" value="ENSP00000325674.6"/>
    <property type="gene ID" value="ENSG00000179044.16"/>
</dbReference>
<dbReference type="GeneID" id="283849"/>
<dbReference type="KEGG" id="hsa:283849"/>
<dbReference type="MANE-Select" id="ENST00000314586.11">
    <property type="protein sequence ID" value="ENSP00000325674.6"/>
    <property type="RefSeq nucleotide sequence ID" value="NM_178516.4"/>
    <property type="RefSeq protein sequence ID" value="NP_848611.2"/>
</dbReference>
<dbReference type="UCSC" id="uc002erx.1">
    <property type="organism name" value="human"/>
</dbReference>
<dbReference type="AGR" id="HGNC:27540"/>
<dbReference type="CTD" id="283849"/>
<dbReference type="DisGeNET" id="283849"/>
<dbReference type="GeneCards" id="EXOC3L1"/>
<dbReference type="HGNC" id="HGNC:27540">
    <property type="gene designation" value="EXOC3L1"/>
</dbReference>
<dbReference type="HPA" id="ENSG00000179044">
    <property type="expression patterns" value="Tissue enriched (lymphoid)"/>
</dbReference>
<dbReference type="MIM" id="614117">
    <property type="type" value="gene"/>
</dbReference>
<dbReference type="neXtProt" id="NX_Q86VI1"/>
<dbReference type="OpenTargets" id="ENSG00000179044"/>
<dbReference type="PharmGKB" id="PA147031724"/>
<dbReference type="VEuPathDB" id="HostDB:ENSG00000179044"/>
<dbReference type="eggNOG" id="KOG2286">
    <property type="taxonomic scope" value="Eukaryota"/>
</dbReference>
<dbReference type="GeneTree" id="ENSGT01030000234613"/>
<dbReference type="HOGENOM" id="CLU_016260_3_0_1"/>
<dbReference type="InParanoid" id="Q86VI1"/>
<dbReference type="OMA" id="REQEPNT"/>
<dbReference type="OrthoDB" id="10047020at2759"/>
<dbReference type="PAN-GO" id="Q86VI1">
    <property type="GO annotations" value="4 GO annotations based on evolutionary models"/>
</dbReference>
<dbReference type="PhylomeDB" id="Q86VI1"/>
<dbReference type="TreeFam" id="TF314979"/>
<dbReference type="PathwayCommons" id="Q86VI1"/>
<dbReference type="SignaLink" id="Q86VI1"/>
<dbReference type="BioGRID-ORCS" id="283849">
    <property type="hits" value="18 hits in 1143 CRISPR screens"/>
</dbReference>
<dbReference type="ChiTaRS" id="EXOC3L1">
    <property type="organism name" value="human"/>
</dbReference>
<dbReference type="GeneWiki" id="EXOC3L"/>
<dbReference type="GenomeRNAi" id="283849"/>
<dbReference type="Pharos" id="Q86VI1">
    <property type="development level" value="Tdark"/>
</dbReference>
<dbReference type="PRO" id="PR:Q86VI1"/>
<dbReference type="Proteomes" id="UP000005640">
    <property type="component" value="Chromosome 16"/>
</dbReference>
<dbReference type="RNAct" id="Q86VI1">
    <property type="molecule type" value="protein"/>
</dbReference>
<dbReference type="Bgee" id="ENSG00000179044">
    <property type="expression patterns" value="Expressed in spleen and 92 other cell types or tissues"/>
</dbReference>
<dbReference type="ExpressionAtlas" id="Q86VI1">
    <property type="expression patterns" value="baseline and differential"/>
</dbReference>
<dbReference type="GO" id="GO:0000145">
    <property type="term" value="C:exocyst"/>
    <property type="evidence" value="ECO:0000250"/>
    <property type="project" value="UniProtKB"/>
</dbReference>
<dbReference type="GO" id="GO:0030141">
    <property type="term" value="C:secretory granule"/>
    <property type="evidence" value="ECO:0000250"/>
    <property type="project" value="UniProtKB"/>
</dbReference>
<dbReference type="GO" id="GO:0030133">
    <property type="term" value="C:transport vesicle"/>
    <property type="evidence" value="ECO:0007669"/>
    <property type="project" value="UniProtKB-SubCell"/>
</dbReference>
<dbReference type="GO" id="GO:0000149">
    <property type="term" value="F:SNARE binding"/>
    <property type="evidence" value="ECO:0000318"/>
    <property type="project" value="GO_Central"/>
</dbReference>
<dbReference type="GO" id="GO:0051601">
    <property type="term" value="P:exocyst localization"/>
    <property type="evidence" value="ECO:0000318"/>
    <property type="project" value="GO_Central"/>
</dbReference>
<dbReference type="GO" id="GO:0006887">
    <property type="term" value="P:exocytosis"/>
    <property type="evidence" value="ECO:0000250"/>
    <property type="project" value="UniProtKB"/>
</dbReference>
<dbReference type="GO" id="GO:0030072">
    <property type="term" value="P:peptide hormone secretion"/>
    <property type="evidence" value="ECO:0000250"/>
    <property type="project" value="UniProtKB"/>
</dbReference>
<dbReference type="FunFam" id="1.10.357.70:FF:000001">
    <property type="entry name" value="Exocyst complex component 3"/>
    <property type="match status" value="1"/>
</dbReference>
<dbReference type="FunFam" id="1.10.357.50:FF:000009">
    <property type="entry name" value="Exocyst complex component 3-like 1"/>
    <property type="match status" value="1"/>
</dbReference>
<dbReference type="Gene3D" id="1.10.357.50">
    <property type="match status" value="1"/>
</dbReference>
<dbReference type="Gene3D" id="1.10.357.70">
    <property type="entry name" value="Exocyst complex component Sec6, C-terminal domain"/>
    <property type="match status" value="1"/>
</dbReference>
<dbReference type="InterPro" id="IPR010326">
    <property type="entry name" value="EXOC3/Sec6"/>
</dbReference>
<dbReference type="InterPro" id="IPR042532">
    <property type="entry name" value="EXOC3/Sec6_C"/>
</dbReference>
<dbReference type="PANTHER" id="PTHR21292:SF12">
    <property type="entry name" value="EXOCYST COMPLEX COMPONENT 3-LIKE PROTEIN"/>
    <property type="match status" value="1"/>
</dbReference>
<dbReference type="PANTHER" id="PTHR21292">
    <property type="entry name" value="EXOCYST COMPLEX COMPONENT SEC6-RELATED"/>
    <property type="match status" value="1"/>
</dbReference>
<dbReference type="Pfam" id="PF06046">
    <property type="entry name" value="Sec6"/>
    <property type="match status" value="1"/>
</dbReference>